<name>CBIN_SALDC</name>
<sequence>MKKTLMLLAMVVALVILPFFINHGGEYGGSDGEAESQIQAIAPQYKPWFQPLYEPASGEIESLLFTLQGSLGAAVIFYILGYCKGKQRRDDRA</sequence>
<feature type="chain" id="PRO_1000116110" description="Cobalt transport protein CbiN">
    <location>
        <begin position="1"/>
        <end position="93"/>
    </location>
</feature>
<feature type="transmembrane region" description="Helical" evidence="1">
    <location>
        <begin position="5"/>
        <end position="25"/>
    </location>
</feature>
<feature type="transmembrane region" description="Helical" evidence="1">
    <location>
        <begin position="63"/>
        <end position="83"/>
    </location>
</feature>
<organism>
    <name type="scientific">Salmonella dublin (strain CT_02021853)</name>
    <dbReference type="NCBI Taxonomy" id="439851"/>
    <lineage>
        <taxon>Bacteria</taxon>
        <taxon>Pseudomonadati</taxon>
        <taxon>Pseudomonadota</taxon>
        <taxon>Gammaproteobacteria</taxon>
        <taxon>Enterobacterales</taxon>
        <taxon>Enterobacteriaceae</taxon>
        <taxon>Salmonella</taxon>
    </lineage>
</organism>
<keyword id="KW-0997">Cell inner membrane</keyword>
<keyword id="KW-1003">Cell membrane</keyword>
<keyword id="KW-0169">Cobalamin biosynthesis</keyword>
<keyword id="KW-0170">Cobalt</keyword>
<keyword id="KW-0171">Cobalt transport</keyword>
<keyword id="KW-0406">Ion transport</keyword>
<keyword id="KW-0472">Membrane</keyword>
<keyword id="KW-0812">Transmembrane</keyword>
<keyword id="KW-1133">Transmembrane helix</keyword>
<keyword id="KW-0813">Transport</keyword>
<comment type="function">
    <text evidence="1">Part of the energy-coupling factor (ECF) transporter complex CbiMNOQ involved in cobalt import.</text>
</comment>
<comment type="pathway">
    <text evidence="1">Cofactor biosynthesis; adenosylcobalamin biosynthesis.</text>
</comment>
<comment type="subunit">
    <text evidence="1">Forms an energy-coupling factor (ECF) transporter complex composed of an ATP-binding protein (A component, CbiO), a transmembrane protein (T component, CbiQ) and 2 possible substrate-capture proteins (S components, CbiM and CbiN) of unknown stoichimetry.</text>
</comment>
<comment type="subcellular location">
    <subcellularLocation>
        <location evidence="1">Cell inner membrane</location>
        <topology evidence="1">Multi-pass membrane protein</topology>
    </subcellularLocation>
</comment>
<comment type="similarity">
    <text evidence="1">Belongs to the CbiN family.</text>
</comment>
<accession>B5FLZ0</accession>
<dbReference type="EMBL" id="CP001144">
    <property type="protein sequence ID" value="ACH76462.1"/>
    <property type="molecule type" value="Genomic_DNA"/>
</dbReference>
<dbReference type="RefSeq" id="WP_000753212.1">
    <property type="nucleotide sequence ID" value="NC_011205.1"/>
</dbReference>
<dbReference type="KEGG" id="sed:SeD_A2357"/>
<dbReference type="HOGENOM" id="CLU_136197_2_0_6"/>
<dbReference type="UniPathway" id="UPA00148"/>
<dbReference type="Proteomes" id="UP000008322">
    <property type="component" value="Chromosome"/>
</dbReference>
<dbReference type="GO" id="GO:0005886">
    <property type="term" value="C:plasma membrane"/>
    <property type="evidence" value="ECO:0007669"/>
    <property type="project" value="UniProtKB-SubCell"/>
</dbReference>
<dbReference type="GO" id="GO:0015087">
    <property type="term" value="F:cobalt ion transmembrane transporter activity"/>
    <property type="evidence" value="ECO:0007669"/>
    <property type="project" value="UniProtKB-UniRule"/>
</dbReference>
<dbReference type="GO" id="GO:0009236">
    <property type="term" value="P:cobalamin biosynthetic process"/>
    <property type="evidence" value="ECO:0007669"/>
    <property type="project" value="UniProtKB-UniRule"/>
</dbReference>
<dbReference type="HAMAP" id="MF_00330">
    <property type="entry name" value="CbiN"/>
    <property type="match status" value="1"/>
</dbReference>
<dbReference type="InterPro" id="IPR003705">
    <property type="entry name" value="CbiN"/>
</dbReference>
<dbReference type="NCBIfam" id="TIGR01165">
    <property type="entry name" value="cbiN"/>
    <property type="match status" value="1"/>
</dbReference>
<dbReference type="NCBIfam" id="NF002780">
    <property type="entry name" value="PRK02898.1"/>
    <property type="match status" value="1"/>
</dbReference>
<dbReference type="PANTHER" id="PTHR38662">
    <property type="entry name" value="COBALT TRANSPORT PROTEIN CBIN"/>
    <property type="match status" value="1"/>
</dbReference>
<dbReference type="PANTHER" id="PTHR38662:SF1">
    <property type="entry name" value="COBALT TRANSPORT PROTEIN CBIN"/>
    <property type="match status" value="1"/>
</dbReference>
<dbReference type="Pfam" id="PF02553">
    <property type="entry name" value="CbiN"/>
    <property type="match status" value="1"/>
</dbReference>
<proteinExistence type="inferred from homology"/>
<protein>
    <recommendedName>
        <fullName evidence="1">Cobalt transport protein CbiN</fullName>
    </recommendedName>
    <alternativeName>
        <fullName evidence="1">Energy-coupling factor transporter probable substrate-capture protein CbiN</fullName>
        <shortName evidence="1">ECF transporter S component CbiN</shortName>
    </alternativeName>
</protein>
<evidence type="ECO:0000255" key="1">
    <source>
        <dbReference type="HAMAP-Rule" id="MF_00330"/>
    </source>
</evidence>
<reference key="1">
    <citation type="journal article" date="2011" name="J. Bacteriol.">
        <title>Comparative genomics of 28 Salmonella enterica isolates: evidence for CRISPR-mediated adaptive sublineage evolution.</title>
        <authorList>
            <person name="Fricke W.F."/>
            <person name="Mammel M.K."/>
            <person name="McDermott P.F."/>
            <person name="Tartera C."/>
            <person name="White D.G."/>
            <person name="Leclerc J.E."/>
            <person name="Ravel J."/>
            <person name="Cebula T.A."/>
        </authorList>
    </citation>
    <scope>NUCLEOTIDE SEQUENCE [LARGE SCALE GENOMIC DNA]</scope>
    <source>
        <strain>CT_02021853</strain>
    </source>
</reference>
<gene>
    <name evidence="1" type="primary">cbiN</name>
    <name type="ordered locus">SeD_A2357</name>
</gene>